<evidence type="ECO:0000250" key="1"/>
<evidence type="ECO:0000250" key="2">
    <source>
        <dbReference type="UniProtKB" id="Q6UWP2"/>
    </source>
</evidence>
<evidence type="ECO:0000255" key="3"/>
<evidence type="ECO:0000305" key="4"/>
<comment type="function">
    <text evidence="2">Catalyzes the conversion of the 17-keto group of estrone, 4- and 5-androstenes and 5-alpha-androstanes into their 17-beta-hydroxyl metabolites and the conversion of the 3-keto group of 3-, 3,17- and 3,20- diketosteroids into their 3-hydroxyl metabolites. Exhibits reductive 3-beta-hydroxysteroid dehydrogenase activity toward 5-beta-androstanes, 5-beta-pregnanes, 4-pregnenes and bile acids. May also reduce endogenous and exogenous alpha-dicarbonyl compounds and xenobiotic alicyclic ketones.</text>
</comment>
<comment type="catalytic activity">
    <reaction evidence="2">
        <text>a 3beta-hydroxysteroid + NADP(+) = a 3-oxosteroid + NADPH + H(+)</text>
        <dbReference type="Rhea" id="RHEA:34787"/>
        <dbReference type="ChEBI" id="CHEBI:15378"/>
        <dbReference type="ChEBI" id="CHEBI:36836"/>
        <dbReference type="ChEBI" id="CHEBI:47788"/>
        <dbReference type="ChEBI" id="CHEBI:57783"/>
        <dbReference type="ChEBI" id="CHEBI:58349"/>
        <dbReference type="EC" id="1.1.1.270"/>
    </reaction>
</comment>
<comment type="catalytic activity">
    <reaction evidence="2">
        <text>17beta-estradiol + NAD(+) = estrone + NADH + H(+)</text>
        <dbReference type="Rhea" id="RHEA:24612"/>
        <dbReference type="ChEBI" id="CHEBI:15378"/>
        <dbReference type="ChEBI" id="CHEBI:16469"/>
        <dbReference type="ChEBI" id="CHEBI:17263"/>
        <dbReference type="ChEBI" id="CHEBI:57540"/>
        <dbReference type="ChEBI" id="CHEBI:57945"/>
        <dbReference type="EC" id="1.1.1.62"/>
    </reaction>
</comment>
<comment type="catalytic activity">
    <reaction evidence="2">
        <text>17beta-estradiol + NADP(+) = estrone + NADPH + H(+)</text>
        <dbReference type="Rhea" id="RHEA:24616"/>
        <dbReference type="ChEBI" id="CHEBI:15378"/>
        <dbReference type="ChEBI" id="CHEBI:16469"/>
        <dbReference type="ChEBI" id="CHEBI:17263"/>
        <dbReference type="ChEBI" id="CHEBI:57783"/>
        <dbReference type="ChEBI" id="CHEBI:58349"/>
        <dbReference type="EC" id="1.1.1.62"/>
    </reaction>
</comment>
<comment type="activity regulation">
    <text evidence="2">Inhibited by flavonoids including apigenin, luteolin, genistein, kaempferol and quercetin and also by carbenoxolone, zearalenone, glycyrrhetinic, curcumin and flufenamic acid.</text>
</comment>
<comment type="pathway">
    <text evidence="2">Steroid biosynthesis; estrogen biosynthesis.</text>
</comment>
<comment type="subunit">
    <text>Homotetramer.</text>
</comment>
<comment type="subcellular location">
    <subcellularLocation>
        <location evidence="4">Secreted</location>
    </subcellularLocation>
</comment>
<comment type="similarity">
    <text evidence="4">Belongs to the short-chain dehydrogenases/reductases (SDR) family.</text>
</comment>
<comment type="caution">
    <text evidence="4">It is uncertain whether Met-1 or Met-6 is the initiator.</text>
</comment>
<organism>
    <name type="scientific">Mus musculus</name>
    <name type="common">Mouse</name>
    <dbReference type="NCBI Taxonomy" id="10090"/>
    <lineage>
        <taxon>Eukaryota</taxon>
        <taxon>Metazoa</taxon>
        <taxon>Chordata</taxon>
        <taxon>Craniata</taxon>
        <taxon>Vertebrata</taxon>
        <taxon>Euteleostomi</taxon>
        <taxon>Mammalia</taxon>
        <taxon>Eutheria</taxon>
        <taxon>Euarchontoglires</taxon>
        <taxon>Glires</taxon>
        <taxon>Rodentia</taxon>
        <taxon>Myomorpha</taxon>
        <taxon>Muroidea</taxon>
        <taxon>Muridae</taxon>
        <taxon>Murinae</taxon>
        <taxon>Mus</taxon>
        <taxon>Mus</taxon>
    </lineage>
</organism>
<dbReference type="EC" id="1.1.1.270" evidence="2"/>
<dbReference type="EC" id="1.1.1.62" evidence="2"/>
<dbReference type="EMBL" id="AK157041">
    <property type="protein sequence ID" value="BAE33942.1"/>
    <property type="molecule type" value="mRNA"/>
</dbReference>
<dbReference type="EMBL" id="AL596083">
    <property type="status" value="NOT_ANNOTATED_CDS"/>
    <property type="molecule type" value="Genomic_DNA"/>
</dbReference>
<dbReference type="EMBL" id="BC022224">
    <property type="protein sequence ID" value="AAH22224.2"/>
    <property type="molecule type" value="mRNA"/>
</dbReference>
<dbReference type="CCDS" id="CCDS36261.1"/>
<dbReference type="RefSeq" id="NP_808232.2">
    <property type="nucleotide sequence ID" value="NM_177564.5"/>
</dbReference>
<dbReference type="SMR" id="Q3U0B3"/>
<dbReference type="FunCoup" id="Q3U0B3">
    <property type="interactions" value="99"/>
</dbReference>
<dbReference type="STRING" id="10090.ENSMUSP00000043467"/>
<dbReference type="iPTMnet" id="Q3U0B3"/>
<dbReference type="PhosphoSitePlus" id="Q3U0B3"/>
<dbReference type="SwissPalm" id="Q3U0B3"/>
<dbReference type="CPTAC" id="non-CPTAC-3438"/>
<dbReference type="CPTAC" id="non-CPTAC-3784"/>
<dbReference type="jPOST" id="Q3U0B3"/>
<dbReference type="PaxDb" id="10090-ENSMUSP00000043467"/>
<dbReference type="PeptideAtlas" id="Q3U0B3"/>
<dbReference type="ProteomicsDB" id="279382"/>
<dbReference type="Pumba" id="Q3U0B3"/>
<dbReference type="Antibodypedia" id="72789">
    <property type="antibodies" value="187 antibodies from 25 providers"/>
</dbReference>
<dbReference type="DNASU" id="192970"/>
<dbReference type="Ensembl" id="ENSMUST00000047560.8">
    <property type="protein sequence ID" value="ENSMUSP00000043467.8"/>
    <property type="gene ID" value="ENSMUSG00000034449.8"/>
</dbReference>
<dbReference type="GeneID" id="192970"/>
<dbReference type="KEGG" id="mmu:192970"/>
<dbReference type="UCSC" id="uc007kqs.2">
    <property type="organism name" value="mouse"/>
</dbReference>
<dbReference type="AGR" id="MGI:2652816"/>
<dbReference type="CTD" id="79154"/>
<dbReference type="MGI" id="MGI:2652816">
    <property type="gene designation" value="Dhrs11"/>
</dbReference>
<dbReference type="VEuPathDB" id="HostDB:ENSMUSG00000034449"/>
<dbReference type="eggNOG" id="KOG1205">
    <property type="taxonomic scope" value="Eukaryota"/>
</dbReference>
<dbReference type="GeneTree" id="ENSGT00840000129887"/>
<dbReference type="HOGENOM" id="CLU_010194_2_10_1"/>
<dbReference type="InParanoid" id="Q3U0B3"/>
<dbReference type="OMA" id="WRWMWET"/>
<dbReference type="OrthoDB" id="1933717at2759"/>
<dbReference type="PhylomeDB" id="Q3U0B3"/>
<dbReference type="TreeFam" id="TF324174"/>
<dbReference type="UniPathway" id="UPA00769"/>
<dbReference type="BioGRID-ORCS" id="192970">
    <property type="hits" value="3 hits in 77 CRISPR screens"/>
</dbReference>
<dbReference type="PRO" id="PR:Q3U0B3"/>
<dbReference type="Proteomes" id="UP000000589">
    <property type="component" value="Chromosome 11"/>
</dbReference>
<dbReference type="RNAct" id="Q3U0B3">
    <property type="molecule type" value="protein"/>
</dbReference>
<dbReference type="Bgee" id="ENSMUSG00000034449">
    <property type="expression patterns" value="Expressed in fetal liver hematopoietic progenitor cell and 179 other cell types or tissues"/>
</dbReference>
<dbReference type="ExpressionAtlas" id="Q3U0B3">
    <property type="expression patterns" value="baseline and differential"/>
</dbReference>
<dbReference type="GO" id="GO:0005576">
    <property type="term" value="C:extracellular region"/>
    <property type="evidence" value="ECO:0007669"/>
    <property type="project" value="UniProtKB-SubCell"/>
</dbReference>
<dbReference type="GO" id="GO:0072582">
    <property type="term" value="F:17-beta-hydroxysteroid dehydrogenase (NADP+) activity"/>
    <property type="evidence" value="ECO:0007669"/>
    <property type="project" value="Ensembl"/>
</dbReference>
<dbReference type="GO" id="GO:0000253">
    <property type="term" value="F:3-beta-hydroxysteroid 3-dehydrogenase (NADP+) activity"/>
    <property type="evidence" value="ECO:0007669"/>
    <property type="project" value="UniProtKB-EC"/>
</dbReference>
<dbReference type="GO" id="GO:0004303">
    <property type="term" value="F:estradiol 17-beta-dehydrogenase [NAD(P)+] activity"/>
    <property type="evidence" value="ECO:0007669"/>
    <property type="project" value="UniProtKB-EC"/>
</dbReference>
<dbReference type="GO" id="GO:0000166">
    <property type="term" value="F:nucleotide binding"/>
    <property type="evidence" value="ECO:0007669"/>
    <property type="project" value="UniProtKB-KW"/>
</dbReference>
<dbReference type="GO" id="GO:0006703">
    <property type="term" value="P:estrogen biosynthetic process"/>
    <property type="evidence" value="ECO:0007669"/>
    <property type="project" value="UniProtKB-UniPathway"/>
</dbReference>
<dbReference type="CDD" id="cd05343">
    <property type="entry name" value="Mgc4172-like_SDR_c"/>
    <property type="match status" value="1"/>
</dbReference>
<dbReference type="FunFam" id="3.40.50.720:FF:000047">
    <property type="entry name" value="NADP-dependent L-serine/L-allo-threonine dehydrogenase"/>
    <property type="match status" value="1"/>
</dbReference>
<dbReference type="Gene3D" id="3.40.50.720">
    <property type="entry name" value="NAD(P)-binding Rossmann-like Domain"/>
    <property type="match status" value="1"/>
</dbReference>
<dbReference type="InterPro" id="IPR036291">
    <property type="entry name" value="NAD(P)-bd_dom_sf"/>
</dbReference>
<dbReference type="InterPro" id="IPR002347">
    <property type="entry name" value="SDR_fam"/>
</dbReference>
<dbReference type="PANTHER" id="PTHR43115">
    <property type="entry name" value="DEHYDROGENASE/REDUCTASE SDR FAMILY MEMBER 11"/>
    <property type="match status" value="1"/>
</dbReference>
<dbReference type="PANTHER" id="PTHR43115:SF4">
    <property type="entry name" value="DEHYDROGENASE_REDUCTASE SDR FAMILY MEMBER 11"/>
    <property type="match status" value="1"/>
</dbReference>
<dbReference type="Pfam" id="PF00106">
    <property type="entry name" value="adh_short"/>
    <property type="match status" value="1"/>
</dbReference>
<dbReference type="PRINTS" id="PR00081">
    <property type="entry name" value="GDHRDH"/>
</dbReference>
<dbReference type="PRINTS" id="PR00080">
    <property type="entry name" value="SDRFAMILY"/>
</dbReference>
<dbReference type="SUPFAM" id="SSF51735">
    <property type="entry name" value="NAD(P)-binding Rossmann-fold domains"/>
    <property type="match status" value="1"/>
</dbReference>
<accession>Q3U0B3</accession>
<accession>Q5SXB3</accession>
<accession>Q8R249</accession>
<keyword id="KW-0443">Lipid metabolism</keyword>
<keyword id="KW-0521">NADP</keyword>
<keyword id="KW-0547">Nucleotide-binding</keyword>
<keyword id="KW-0560">Oxidoreductase</keyword>
<keyword id="KW-1185">Reference proteome</keyword>
<keyword id="KW-0964">Secreted</keyword>
<keyword id="KW-0732">Signal</keyword>
<keyword id="KW-0753">Steroid metabolism</keyword>
<name>DHR11_MOUSE</name>
<sequence length="260" mass="28274">MTRAGMERWRDRLALVTGASGGIGAAVARALVQQGLKVVGCARTVGNIEELAAECKSAGYPGTLIPYRCDLSNEEDILSMFSAVRSQHSGVDICINNAGMARPDTLLSGSTSGWKDMFNVNVLALSICTREAYQSMKERNIDDGHIININSMCGHRVPPQSVIHFYSATKYAVTALTEGLRQELLEAQTHIRATCISPGLVETQFAFKLHDKDPGEAAATYEHIKCLRPEDVAEAVIYVLSTPPHVQVGDIQMRPTEQVT</sequence>
<feature type="signal peptide" evidence="3">
    <location>
        <begin position="1"/>
        <end position="30"/>
    </location>
</feature>
<feature type="chain" id="PRO_0000045491" description="Dehydrogenase/reductase SDR family member 11">
    <location>
        <begin position="31"/>
        <end position="260"/>
    </location>
</feature>
<feature type="active site" description="Proton acceptor" evidence="1">
    <location>
        <position position="166"/>
    </location>
</feature>
<feature type="binding site" evidence="2">
    <location>
        <begin position="18"/>
        <end position="23"/>
    </location>
    <ligand>
        <name>NADP(+)</name>
        <dbReference type="ChEBI" id="CHEBI:58349"/>
    </ligand>
</feature>
<feature type="binding site" evidence="2">
    <location>
        <begin position="43"/>
        <end position="44"/>
    </location>
    <ligand>
        <name>NADP(+)</name>
        <dbReference type="ChEBI" id="CHEBI:58349"/>
    </ligand>
</feature>
<feature type="binding site" evidence="2">
    <location>
        <position position="49"/>
    </location>
    <ligand>
        <name>NADP(+)</name>
        <dbReference type="ChEBI" id="CHEBI:58349"/>
    </ligand>
</feature>
<feature type="binding site" evidence="2">
    <location>
        <begin position="70"/>
        <end position="71"/>
    </location>
    <ligand>
        <name>NADP(+)</name>
        <dbReference type="ChEBI" id="CHEBI:58349"/>
    </ligand>
</feature>
<feature type="binding site" evidence="2">
    <location>
        <position position="97"/>
    </location>
    <ligand>
        <name>NADP(+)</name>
        <dbReference type="ChEBI" id="CHEBI:58349"/>
    </ligand>
</feature>
<feature type="binding site" evidence="2">
    <location>
        <position position="151"/>
    </location>
    <ligand>
        <name>substrate</name>
    </ligand>
</feature>
<feature type="binding site" evidence="2">
    <location>
        <position position="166"/>
    </location>
    <ligand>
        <name>NADP(+)</name>
        <dbReference type="ChEBI" id="CHEBI:58349"/>
    </ligand>
</feature>
<feature type="binding site" evidence="2">
    <location>
        <position position="166"/>
    </location>
    <ligand>
        <name>substrate</name>
    </ligand>
</feature>
<feature type="binding site" evidence="2">
    <location>
        <position position="170"/>
    </location>
    <ligand>
        <name>NADP(+)</name>
        <dbReference type="ChEBI" id="CHEBI:58349"/>
    </ligand>
</feature>
<feature type="binding site" evidence="2">
    <location>
        <begin position="201"/>
        <end position="204"/>
    </location>
    <ligand>
        <name>NADP(+)</name>
        <dbReference type="ChEBI" id="CHEBI:58349"/>
    </ligand>
</feature>
<feature type="binding site" evidence="2">
    <location>
        <position position="208"/>
    </location>
    <ligand>
        <name>NADP(+)</name>
        <dbReference type="ChEBI" id="CHEBI:58349"/>
    </ligand>
</feature>
<gene>
    <name type="primary">Dhrs11</name>
    <name evidence="2" type="synonym">Sdr24c1</name>
</gene>
<proteinExistence type="evidence at protein level"/>
<protein>
    <recommendedName>
        <fullName>Dehydrogenase/reductase SDR family member 11</fullName>
    </recommendedName>
    <alternativeName>
        <fullName evidence="4">17-beta-hydroxysteroid dehydrogenase</fullName>
    </alternativeName>
    <alternativeName>
        <fullName evidence="4">3-beta-hydroxysteroid 3-dehydrogenase</fullName>
        <ecNumber evidence="2">1.1.1.270</ecNumber>
    </alternativeName>
    <alternativeName>
        <fullName evidence="4">Estradiol 17-beta-dehydrogenase</fullName>
        <ecNumber evidence="2">1.1.1.62</ecNumber>
    </alternativeName>
    <alternativeName>
        <fullName evidence="2">Short-chain dehydrogenase/reductase family 24C member 1</fullName>
    </alternativeName>
</protein>
<reference key="1">
    <citation type="journal article" date="2005" name="Science">
        <title>The transcriptional landscape of the mammalian genome.</title>
        <authorList>
            <person name="Carninci P."/>
            <person name="Kasukawa T."/>
            <person name="Katayama S."/>
            <person name="Gough J."/>
            <person name="Frith M.C."/>
            <person name="Maeda N."/>
            <person name="Oyama R."/>
            <person name="Ravasi T."/>
            <person name="Lenhard B."/>
            <person name="Wells C."/>
            <person name="Kodzius R."/>
            <person name="Shimokawa K."/>
            <person name="Bajic V.B."/>
            <person name="Brenner S.E."/>
            <person name="Batalov S."/>
            <person name="Forrest A.R."/>
            <person name="Zavolan M."/>
            <person name="Davis M.J."/>
            <person name="Wilming L.G."/>
            <person name="Aidinis V."/>
            <person name="Allen J.E."/>
            <person name="Ambesi-Impiombato A."/>
            <person name="Apweiler R."/>
            <person name="Aturaliya R.N."/>
            <person name="Bailey T.L."/>
            <person name="Bansal M."/>
            <person name="Baxter L."/>
            <person name="Beisel K.W."/>
            <person name="Bersano T."/>
            <person name="Bono H."/>
            <person name="Chalk A.M."/>
            <person name="Chiu K.P."/>
            <person name="Choudhary V."/>
            <person name="Christoffels A."/>
            <person name="Clutterbuck D.R."/>
            <person name="Crowe M.L."/>
            <person name="Dalla E."/>
            <person name="Dalrymple B.P."/>
            <person name="de Bono B."/>
            <person name="Della Gatta G."/>
            <person name="di Bernardo D."/>
            <person name="Down T."/>
            <person name="Engstrom P."/>
            <person name="Fagiolini M."/>
            <person name="Faulkner G."/>
            <person name="Fletcher C.F."/>
            <person name="Fukushima T."/>
            <person name="Furuno M."/>
            <person name="Futaki S."/>
            <person name="Gariboldi M."/>
            <person name="Georgii-Hemming P."/>
            <person name="Gingeras T.R."/>
            <person name="Gojobori T."/>
            <person name="Green R.E."/>
            <person name="Gustincich S."/>
            <person name="Harbers M."/>
            <person name="Hayashi Y."/>
            <person name="Hensch T.K."/>
            <person name="Hirokawa N."/>
            <person name="Hill D."/>
            <person name="Huminiecki L."/>
            <person name="Iacono M."/>
            <person name="Ikeo K."/>
            <person name="Iwama A."/>
            <person name="Ishikawa T."/>
            <person name="Jakt M."/>
            <person name="Kanapin A."/>
            <person name="Katoh M."/>
            <person name="Kawasawa Y."/>
            <person name="Kelso J."/>
            <person name="Kitamura H."/>
            <person name="Kitano H."/>
            <person name="Kollias G."/>
            <person name="Krishnan S.P."/>
            <person name="Kruger A."/>
            <person name="Kummerfeld S.K."/>
            <person name="Kurochkin I.V."/>
            <person name="Lareau L.F."/>
            <person name="Lazarevic D."/>
            <person name="Lipovich L."/>
            <person name="Liu J."/>
            <person name="Liuni S."/>
            <person name="McWilliam S."/>
            <person name="Madan Babu M."/>
            <person name="Madera M."/>
            <person name="Marchionni L."/>
            <person name="Matsuda H."/>
            <person name="Matsuzawa S."/>
            <person name="Miki H."/>
            <person name="Mignone F."/>
            <person name="Miyake S."/>
            <person name="Morris K."/>
            <person name="Mottagui-Tabar S."/>
            <person name="Mulder N."/>
            <person name="Nakano N."/>
            <person name="Nakauchi H."/>
            <person name="Ng P."/>
            <person name="Nilsson R."/>
            <person name="Nishiguchi S."/>
            <person name="Nishikawa S."/>
            <person name="Nori F."/>
            <person name="Ohara O."/>
            <person name="Okazaki Y."/>
            <person name="Orlando V."/>
            <person name="Pang K.C."/>
            <person name="Pavan W.J."/>
            <person name="Pavesi G."/>
            <person name="Pesole G."/>
            <person name="Petrovsky N."/>
            <person name="Piazza S."/>
            <person name="Reed J."/>
            <person name="Reid J.F."/>
            <person name="Ring B.Z."/>
            <person name="Ringwald M."/>
            <person name="Rost B."/>
            <person name="Ruan Y."/>
            <person name="Salzberg S.L."/>
            <person name="Sandelin A."/>
            <person name="Schneider C."/>
            <person name="Schoenbach C."/>
            <person name="Sekiguchi K."/>
            <person name="Semple C.A."/>
            <person name="Seno S."/>
            <person name="Sessa L."/>
            <person name="Sheng Y."/>
            <person name="Shibata Y."/>
            <person name="Shimada H."/>
            <person name="Shimada K."/>
            <person name="Silva D."/>
            <person name="Sinclair B."/>
            <person name="Sperling S."/>
            <person name="Stupka E."/>
            <person name="Sugiura K."/>
            <person name="Sultana R."/>
            <person name="Takenaka Y."/>
            <person name="Taki K."/>
            <person name="Tammoja K."/>
            <person name="Tan S.L."/>
            <person name="Tang S."/>
            <person name="Taylor M.S."/>
            <person name="Tegner J."/>
            <person name="Teichmann S.A."/>
            <person name="Ueda H.R."/>
            <person name="van Nimwegen E."/>
            <person name="Verardo R."/>
            <person name="Wei C.L."/>
            <person name="Yagi K."/>
            <person name="Yamanishi H."/>
            <person name="Zabarovsky E."/>
            <person name="Zhu S."/>
            <person name="Zimmer A."/>
            <person name="Hide W."/>
            <person name="Bult C."/>
            <person name="Grimmond S.M."/>
            <person name="Teasdale R.D."/>
            <person name="Liu E.T."/>
            <person name="Brusic V."/>
            <person name="Quackenbush J."/>
            <person name="Wahlestedt C."/>
            <person name="Mattick J.S."/>
            <person name="Hume D.A."/>
            <person name="Kai C."/>
            <person name="Sasaki D."/>
            <person name="Tomaru Y."/>
            <person name="Fukuda S."/>
            <person name="Kanamori-Katayama M."/>
            <person name="Suzuki M."/>
            <person name="Aoki J."/>
            <person name="Arakawa T."/>
            <person name="Iida J."/>
            <person name="Imamura K."/>
            <person name="Itoh M."/>
            <person name="Kato T."/>
            <person name="Kawaji H."/>
            <person name="Kawagashira N."/>
            <person name="Kawashima T."/>
            <person name="Kojima M."/>
            <person name="Kondo S."/>
            <person name="Konno H."/>
            <person name="Nakano K."/>
            <person name="Ninomiya N."/>
            <person name="Nishio T."/>
            <person name="Okada M."/>
            <person name="Plessy C."/>
            <person name="Shibata K."/>
            <person name="Shiraki T."/>
            <person name="Suzuki S."/>
            <person name="Tagami M."/>
            <person name="Waki K."/>
            <person name="Watahiki A."/>
            <person name="Okamura-Oho Y."/>
            <person name="Suzuki H."/>
            <person name="Kawai J."/>
            <person name="Hayashizaki Y."/>
        </authorList>
    </citation>
    <scope>NUCLEOTIDE SEQUENCE [LARGE SCALE MRNA]</scope>
    <source>
        <strain>NOD</strain>
        <tissue>Spleen</tissue>
    </source>
</reference>
<reference key="2">
    <citation type="journal article" date="2009" name="PLoS Biol.">
        <title>Lineage-specific biology revealed by a finished genome assembly of the mouse.</title>
        <authorList>
            <person name="Church D.M."/>
            <person name="Goodstadt L."/>
            <person name="Hillier L.W."/>
            <person name="Zody M.C."/>
            <person name="Goldstein S."/>
            <person name="She X."/>
            <person name="Bult C.J."/>
            <person name="Agarwala R."/>
            <person name="Cherry J.L."/>
            <person name="DiCuccio M."/>
            <person name="Hlavina W."/>
            <person name="Kapustin Y."/>
            <person name="Meric P."/>
            <person name="Maglott D."/>
            <person name="Birtle Z."/>
            <person name="Marques A.C."/>
            <person name="Graves T."/>
            <person name="Zhou S."/>
            <person name="Teague B."/>
            <person name="Potamousis K."/>
            <person name="Churas C."/>
            <person name="Place M."/>
            <person name="Herschleb J."/>
            <person name="Runnheim R."/>
            <person name="Forrest D."/>
            <person name="Amos-Landgraf J."/>
            <person name="Schwartz D.C."/>
            <person name="Cheng Z."/>
            <person name="Lindblad-Toh K."/>
            <person name="Eichler E.E."/>
            <person name="Ponting C.P."/>
        </authorList>
    </citation>
    <scope>NUCLEOTIDE SEQUENCE [LARGE SCALE GENOMIC DNA]</scope>
    <source>
        <strain>C57BL/6J</strain>
    </source>
</reference>
<reference key="3">
    <citation type="journal article" date="2004" name="Genome Res.">
        <title>The status, quality, and expansion of the NIH full-length cDNA project: the Mammalian Gene Collection (MGC).</title>
        <authorList>
            <consortium name="The MGC Project Team"/>
        </authorList>
    </citation>
    <scope>NUCLEOTIDE SEQUENCE [LARGE SCALE MRNA]</scope>
    <source>
        <strain>FVB/N</strain>
        <tissue>Colon</tissue>
    </source>
</reference>
<reference key="4">
    <citation type="journal article" date="2010" name="Cell">
        <title>A tissue-specific atlas of mouse protein phosphorylation and expression.</title>
        <authorList>
            <person name="Huttlin E.L."/>
            <person name="Jedrychowski M.P."/>
            <person name="Elias J.E."/>
            <person name="Goswami T."/>
            <person name="Rad R."/>
            <person name="Beausoleil S.A."/>
            <person name="Villen J."/>
            <person name="Haas W."/>
            <person name="Sowa M.E."/>
            <person name="Gygi S.P."/>
        </authorList>
    </citation>
    <scope>IDENTIFICATION BY MASS SPECTROMETRY [LARGE SCALE ANALYSIS]</scope>
    <source>
        <tissue>Brown adipose tissue</tissue>
        <tissue>Heart</tissue>
        <tissue>Kidney</tissue>
        <tissue>Liver</tissue>
        <tissue>Lung</tissue>
        <tissue>Spleen</tissue>
        <tissue>Testis</tissue>
    </source>
</reference>